<gene>
    <name type="primary">OPG067</name>
    <name type="ordered locus">VACWR061</name>
    <name type="ORF">E5R</name>
</gene>
<keyword id="KW-0244">Early protein</keyword>
<keyword id="KW-1035">Host cytoplasm</keyword>
<keyword id="KW-1048">Host nucleus</keyword>
<keyword id="KW-0945">Host-virus interaction</keyword>
<keyword id="KW-1090">Inhibition of host innate immune response by virus</keyword>
<keyword id="KW-1113">Inhibition of host RLR pathway by virus</keyword>
<keyword id="KW-0472">Membrane</keyword>
<keyword id="KW-1185">Reference proteome</keyword>
<keyword id="KW-0677">Repeat</keyword>
<keyword id="KW-0812">Transmembrane</keyword>
<keyword id="KW-1133">Transmembrane helix</keyword>
<keyword id="KW-0899">Viral immunoevasion</keyword>
<organism>
    <name type="scientific">Vaccinia virus (strain Western Reserve)</name>
    <name type="common">VACV</name>
    <name type="synonym">Vaccinia virus (strain WR)</name>
    <dbReference type="NCBI Taxonomy" id="10254"/>
    <lineage>
        <taxon>Viruses</taxon>
        <taxon>Varidnaviria</taxon>
        <taxon>Bamfordvirae</taxon>
        <taxon>Nucleocytoviricota</taxon>
        <taxon>Pokkesviricetes</taxon>
        <taxon>Chitovirales</taxon>
        <taxon>Poxviridae</taxon>
        <taxon>Chordopoxvirinae</taxon>
        <taxon>Orthopoxvirus</taxon>
        <taxon>Vaccinia virus</taxon>
    </lineage>
</organism>
<name>PG067_VACCW</name>
<evidence type="ECO:0000255" key="1"/>
<evidence type="ECO:0000255" key="2">
    <source>
        <dbReference type="PROSITE-ProRule" id="PRU00784"/>
    </source>
</evidence>
<evidence type="ECO:0000269" key="3">
    <source>
    </source>
</evidence>
<evidence type="ECO:0000269" key="4">
    <source>
    </source>
</evidence>
<evidence type="ECO:0000269" key="5">
    <source>
    </source>
</evidence>
<evidence type="ECO:0000303" key="6">
    <source>
    </source>
</evidence>
<evidence type="ECO:0000305" key="7"/>
<evidence type="ECO:0000305" key="8">
    <source>
    </source>
</evidence>
<dbReference type="EMBL" id="M36339">
    <property type="protein sequence ID" value="AAB59825.1"/>
    <property type="molecule type" value="Genomic_DNA"/>
</dbReference>
<dbReference type="EMBL" id="AY243312">
    <property type="protein sequence ID" value="AAO89340.1"/>
    <property type="molecule type" value="Genomic_DNA"/>
</dbReference>
<dbReference type="PIR" id="D35928">
    <property type="entry name" value="D35928"/>
</dbReference>
<dbReference type="RefSeq" id="YP_232943.1">
    <property type="nucleotide sequence ID" value="NC_006998.1"/>
</dbReference>
<dbReference type="SMR" id="P21606"/>
<dbReference type="DNASU" id="3707594"/>
<dbReference type="GeneID" id="3707594"/>
<dbReference type="KEGG" id="vg:3707594"/>
<dbReference type="Proteomes" id="UP000000344">
    <property type="component" value="Genome"/>
</dbReference>
<dbReference type="GO" id="GO:0030430">
    <property type="term" value="C:host cell cytoplasm"/>
    <property type="evidence" value="ECO:0007669"/>
    <property type="project" value="UniProtKB-SubCell"/>
</dbReference>
<dbReference type="GO" id="GO:0042025">
    <property type="term" value="C:host cell nucleus"/>
    <property type="evidence" value="ECO:0007669"/>
    <property type="project" value="UniProtKB-SubCell"/>
</dbReference>
<dbReference type="GO" id="GO:0016020">
    <property type="term" value="C:membrane"/>
    <property type="evidence" value="ECO:0007669"/>
    <property type="project" value="UniProtKB-SubCell"/>
</dbReference>
<dbReference type="GO" id="GO:0003677">
    <property type="term" value="F:DNA binding"/>
    <property type="evidence" value="ECO:0007669"/>
    <property type="project" value="InterPro"/>
</dbReference>
<dbReference type="GO" id="GO:0052170">
    <property type="term" value="P:symbiont-mediated suppression of host innate immune response"/>
    <property type="evidence" value="ECO:0007669"/>
    <property type="project" value="UniProtKB-KW"/>
</dbReference>
<dbReference type="InterPro" id="IPR018379">
    <property type="entry name" value="BEN_domain"/>
</dbReference>
<dbReference type="InterPro" id="IPR004334">
    <property type="entry name" value="Poxvirus_E5R"/>
</dbReference>
<dbReference type="Pfam" id="PF10523">
    <property type="entry name" value="BEN"/>
    <property type="match status" value="2"/>
</dbReference>
<dbReference type="PIRSF" id="PIRSF015691">
    <property type="entry name" value="VAC_E5R"/>
    <property type="match status" value="1"/>
</dbReference>
<dbReference type="PROSITE" id="PS51457">
    <property type="entry name" value="BEN"/>
    <property type="match status" value="2"/>
</dbReference>
<accession>P21606</accession>
<accession>Q76ZW0</accession>
<sequence>MLILTKVNIYMLIIVLWLYGYNFIISESQCPMINDDSFTLKRKYQIDSAESTIKMDKKRTKFQNRAKMVKEINQTIRAAQTHYETLKLGYIKFKRMIRTTTLEDIAPSIPNNQKTYKLFSDISAIGKASRNPSKMVYALLLYMFPNLFGDDHRFIRYRMHPMSKIKHKIFSPFKLNLIRILVEERFYNNECRSNKWRIIGTQVDKMLIAESDKYTIDARYNLKPMYRIKGKSEEDTLFIKQMVEQCVTSQELVEKVLKILFRDLFKSGEYKAYRYDDDVENGFIGLDTLKLNIVHDIVEPCMPVRRPVAKILCKEMVNKYFENPLHIIGKNLQECIDFVSE</sequence>
<feature type="chain" id="PRO_0000099452" description="Protein OPG067">
    <location>
        <begin position="1"/>
        <end position="341"/>
    </location>
</feature>
<feature type="transmembrane region" description="Helical" evidence="1">
    <location>
        <begin position="7"/>
        <end position="25"/>
    </location>
</feature>
<feature type="domain" description="BEN 1" evidence="2 8">
    <location>
        <begin position="112"/>
        <end position="222"/>
    </location>
</feature>
<feature type="domain" description="BEN 2" evidence="2 8">
    <location>
        <begin position="233"/>
        <end position="328"/>
    </location>
</feature>
<feature type="mutagenesis site" description="Complete loss of nuclear localization." evidence="5">
    <original>R</original>
    <variation>K</variation>
    <location>
        <position position="95"/>
    </location>
</feature>
<proteinExistence type="evidence at protein level"/>
<protein>
    <recommendedName>
        <fullName>Protein OPG067</fullName>
    </recommendedName>
    <alternativeName>
        <fullName>Protein E5</fullName>
    </alternativeName>
</protein>
<reference key="1">
    <citation type="journal article" date="1990" name="Mol. Cell. Biol.">
        <title>Identification of rpo30, a vaccinia virus RNA polymerase gene with structural similarity to a eucaryotic transcription elongation factor.</title>
        <authorList>
            <person name="Ahn B.-Y."/>
            <person name="Gershon P.D."/>
            <person name="Jones E.V."/>
            <person name="Moss B."/>
        </authorList>
    </citation>
    <scope>NUCLEOTIDE SEQUENCE [GENOMIC DNA]</scope>
</reference>
<reference key="2">
    <citation type="submission" date="2003-02" db="EMBL/GenBank/DDBJ databases">
        <title>Sequencing of the coding region of Vaccinia-WR to an average 9-fold redundancy and an error rate of 0.16/10kb.</title>
        <authorList>
            <person name="Esposito J.J."/>
            <person name="Frace A.M."/>
            <person name="Sammons S.A."/>
            <person name="Olsen-Rasmussen M."/>
            <person name="Osborne J."/>
            <person name="Wohlhueter R."/>
        </authorList>
    </citation>
    <scope>NUCLEOTIDE SEQUENCE [LARGE SCALE GENOMIC DNA]</scope>
</reference>
<reference key="3">
    <citation type="journal article" date="1999" name="Virus Res.">
        <title>Identification by mass spectroscopy of three major early proteins associated with virosomes in vaccinia virus-infected cells.</title>
        <authorList>
            <person name="Murcia-Nicolas A."/>
            <person name="Bolbach G."/>
            <person name="Blais J.C."/>
            <person name="Beaud G."/>
        </authorList>
    </citation>
    <scope>INDUCTION</scope>
    <scope>IDENTIFICATION BY MASS SPECTROMETRY</scope>
    <scope>SUBCELLULAR LOCATION</scope>
    <scope>FUNCTION</scope>
</reference>
<reference key="4">
    <citation type="journal article" date="2008" name="Bioinformatics">
        <title>BEN: a novel domain in chromatin factors and DNA viral proteins.</title>
        <authorList>
            <person name="Abhiman S."/>
            <person name="Iyer L.M."/>
            <person name="Aravind L."/>
        </authorList>
    </citation>
    <scope>FUNCTION</scope>
</reference>
<reference key="5">
    <citation type="journal article" date="2015" name="J. Virol.">
        <title>Deciphering poxvirus gene expression by RNA sequencing and ribosome profiling.</title>
        <authorList>
            <person name="Yang Z."/>
            <person name="Cao S."/>
            <person name="Martens C.A."/>
            <person name="Porcella S.F."/>
            <person name="Xie Z."/>
            <person name="Ma M."/>
            <person name="Shen B."/>
            <person name="Moss B."/>
        </authorList>
    </citation>
    <scope>INDUCTION</scope>
</reference>
<reference key="6">
    <citation type="journal article" date="2023" name="Nat. Commun.">
        <title>Vaccinia E5 is a major inhibitor of the DNA sensor cGAS.</title>
        <authorList>
            <person name="Yang N."/>
            <person name="Wang Y."/>
            <person name="Dai P."/>
            <person name="Li T."/>
            <person name="Zierhut C."/>
            <person name="Tan A."/>
            <person name="Zhang T."/>
            <person name="Xiang J.Z."/>
            <person name="Ordureau A."/>
            <person name="Funabiki H."/>
            <person name="Chen Z."/>
            <person name="Deng L."/>
        </authorList>
    </citation>
    <scope>FUNCTION</scope>
    <scope>SUBCELLULAR LOCATION</scope>
    <scope>INTERACTION WITH HOST CGAS</scope>
    <scope>MUTAGENESIS OF ARG-95</scope>
</reference>
<organismHost>
    <name type="scientific">Bos taurus</name>
    <name type="common">Bovine</name>
    <dbReference type="NCBI Taxonomy" id="9913"/>
</organismHost>
<comment type="function">
    <text evidence="3 5 6">Major early protein present in virus factories (PubMed:10854161). The presence of BEN domains suggests a possible role in organization of viral DNA during replication or transcription (PubMed:18203771). Plays an essential role in the inhibition of the cGAS-dependent type I IFN induction in host dendritic cells. Mechanistically, abolishes cGAMP production by triggering host CGAS degradation via a proteasome-dependent mechanism (PubMed:37217469).</text>
</comment>
<comment type="subunit">
    <text evidence="5">Interacts with host CGAS; this interaction inhibits CGAS-mediated type I interferon response.</text>
</comment>
<comment type="subcellular location">
    <subcellularLocation>
        <location evidence="3 5">Host cytoplasm</location>
    </subcellularLocation>
    <subcellularLocation>
        <location evidence="5">Host nucleus</location>
    </subcellularLocation>
    <subcellularLocation>
        <location evidence="1">Membrane</location>
        <topology evidence="1">Single-pass membrane protein</topology>
    </subcellularLocation>
    <text evidence="3">Localizes in cytoplasmic virus factories.</text>
</comment>
<comment type="induction">
    <text evidence="3 4">Expressed in the early phase of the viral replicative cycle.</text>
</comment>
<comment type="similarity">
    <text evidence="7">Belongs to the orthopoxvirus OPG067 family.</text>
</comment>